<organism>
    <name type="scientific">Rattus norvegicus</name>
    <name type="common">Rat</name>
    <dbReference type="NCBI Taxonomy" id="10116"/>
    <lineage>
        <taxon>Eukaryota</taxon>
        <taxon>Metazoa</taxon>
        <taxon>Chordata</taxon>
        <taxon>Craniata</taxon>
        <taxon>Vertebrata</taxon>
        <taxon>Euteleostomi</taxon>
        <taxon>Mammalia</taxon>
        <taxon>Eutheria</taxon>
        <taxon>Euarchontoglires</taxon>
        <taxon>Glires</taxon>
        <taxon>Rodentia</taxon>
        <taxon>Myomorpha</taxon>
        <taxon>Muroidea</taxon>
        <taxon>Muridae</taxon>
        <taxon>Murinae</taxon>
        <taxon>Rattus</taxon>
    </lineage>
</organism>
<proteinExistence type="evidence at protein level"/>
<gene>
    <name evidence="2" type="primary">Qtrt1</name>
</gene>
<protein>
    <recommendedName>
        <fullName evidence="2">Queuine tRNA-ribosyltransferase catalytic subunit 1</fullName>
        <ecNumber evidence="2 3">2.4.2.64</ecNumber>
    </recommendedName>
    <alternativeName>
        <fullName evidence="2">Guanine insertion enzyme</fullName>
    </alternativeName>
    <alternativeName>
        <fullName evidence="2">tRNA-guanine transglycosylase</fullName>
    </alternativeName>
</protein>
<sequence>MAAVGSPGSLESAPRIMRLVAECSRSRARAGELRLPHGTVATPVFMPVGTQATMKGITAEQLDSLGCRICLGNTYHLGLRPGPELIQKAHGLHGFMNWPHNLLTDSGGFQMVSLISLSEVTEEGVRFRSPYDGEETLLSPERSVEIQNALGSDIIMQLDDVVSSTVTGPRVEEAMHRSVRWLDRCIAAHKRQDKQNLFAIIQGGLNADLRTTCLKEMTKRDVPGFAIGGLSGGESKEQFWKMVALSTSMLPKDKPRYLMGVGYATDLVVCVALGCDMFDCVYPTRTARFGSALVPTGNLQLKKQQYAKDFSPINPECPCATCQTHSRAFLHTLLHSDNTAALHHLTVHNIAYQLQLLSAARSSILEQRFPDFVRNFMRTMYGDHSLCPAWAIEALASVGITLT</sequence>
<comment type="function">
    <text evidence="2 3">Catalytic subunit of the queuine tRNA-ribosyltransferase (TGT) that catalyzes the base-exchange of a guanine (G) residue with queuine (Q) at position 34 (anticodon wobble position) in tRNAs with GU(N) anticodons (tRNA-Asp, -Asn, -His and -Tyr), resulting in the hypermodified nucleoside queuosine (7-(((4,5-cis-dihydroxy-2-cyclopenten-1-yl)amino)methyl)-7-deazaguanosine) (PubMed:6986171). Catalysis occurs through a double-displacement mechanism. The nucleophile active site attacks the C1' of nucleotide 34 to detach the guanine base from the RNA, forming a covalent enzyme-RNA intermediate. The proton acceptor active site deprotonates the incoming queuine, allowing a nucleophilic attack on the C1' of the ribose to form the product.</text>
</comment>
<comment type="catalytic activity">
    <reaction evidence="2 3">
        <text>guanosine(34) in tRNA + queuine = queuosine(34) in tRNA + guanine</text>
        <dbReference type="Rhea" id="RHEA:16633"/>
        <dbReference type="Rhea" id="RHEA-COMP:10341"/>
        <dbReference type="Rhea" id="RHEA-COMP:18571"/>
        <dbReference type="ChEBI" id="CHEBI:16235"/>
        <dbReference type="ChEBI" id="CHEBI:17433"/>
        <dbReference type="ChEBI" id="CHEBI:74269"/>
        <dbReference type="ChEBI" id="CHEBI:194431"/>
        <dbReference type="EC" id="2.4.2.64"/>
    </reaction>
</comment>
<comment type="cofactor">
    <cofactor evidence="2">
        <name>Zn(2+)</name>
        <dbReference type="ChEBI" id="CHEBI:29105"/>
    </cofactor>
</comment>
<comment type="biophysicochemical properties">
    <kinetics>
        <KM evidence="3">0.29 uM for queuine</KM>
        <KM evidence="3">2.1 uM for 7-aminomethyl-7-carbaguanine</KM>
        <KM evidence="3">0.83 uM for guanine</KM>
    </kinetics>
    <phDependence>
        <text evidence="3">Optimum pH is 7.3.</text>
    </phDependence>
</comment>
<comment type="subunit">
    <text evidence="2">Heterodimer of a catalytic subunit QTRT1 and an accessory subunit QTRT2.</text>
</comment>
<comment type="subcellular location">
    <subcellularLocation>
        <location evidence="2">Cytoplasm</location>
    </subcellularLocation>
    <subcellularLocation>
        <location evidence="2">Mitochondrion outer membrane</location>
        <topology evidence="2">Peripheral membrane protein</topology>
        <orientation evidence="2">Cytoplasmic side</orientation>
    </subcellularLocation>
    <text evidence="2">Weakly associates with mitochondria, possibly via QTRT2.</text>
</comment>
<comment type="alternative products">
    <event type="alternative splicing"/>
    <isoform>
        <id>Q4QR99-1</id>
        <name>1</name>
        <sequence type="displayed"/>
    </isoform>
    <isoform>
        <id>Q4QR99-2</id>
        <name>2</name>
        <sequence type="described" ref="VSP_038056"/>
    </isoform>
</comment>
<comment type="similarity">
    <text evidence="2">Belongs to the queuine tRNA-ribosyltransferase family.</text>
</comment>
<comment type="sequence caution" evidence="5">
    <conflict type="frameshift">
        <sequence resource="EMBL-CDS" id="BAA93552"/>
    </conflict>
</comment>
<name>TGT_RAT</name>
<dbReference type="EC" id="2.4.2.64" evidence="2 3"/>
<dbReference type="EMBL" id="AB034634">
    <property type="protein sequence ID" value="BAA93552.1"/>
    <property type="status" value="ALT_FRAME"/>
    <property type="molecule type" value="mRNA"/>
</dbReference>
<dbReference type="EMBL" id="BC097321">
    <property type="protein sequence ID" value="AAH97321.1"/>
    <property type="molecule type" value="mRNA"/>
</dbReference>
<dbReference type="RefSeq" id="NP_071586.2">
    <molecule id="Q4QR99-1"/>
    <property type="nucleotide sequence ID" value="NM_022250.2"/>
</dbReference>
<dbReference type="SMR" id="Q4QR99"/>
<dbReference type="FunCoup" id="Q4QR99">
    <property type="interactions" value="1533"/>
</dbReference>
<dbReference type="STRING" id="10116.ENSRNOP00000010030"/>
<dbReference type="ChEMBL" id="CHEMBL4395"/>
<dbReference type="GlyGen" id="Q4QR99">
    <property type="glycosylation" value="1 site, 1 O-linked glycan (1 site)"/>
</dbReference>
<dbReference type="iPTMnet" id="Q4QR99"/>
<dbReference type="PhosphoSitePlus" id="Q4QR99"/>
<dbReference type="PaxDb" id="10116-ENSRNOP00000010030"/>
<dbReference type="GeneID" id="64016"/>
<dbReference type="KEGG" id="rno:64016"/>
<dbReference type="UCSC" id="RGD:620996">
    <molecule id="Q4QR99-1"/>
    <property type="organism name" value="rat"/>
</dbReference>
<dbReference type="AGR" id="RGD:620996"/>
<dbReference type="CTD" id="81890"/>
<dbReference type="RGD" id="620996">
    <property type="gene designation" value="Qtrt1"/>
</dbReference>
<dbReference type="eggNOG" id="KOG3908">
    <property type="taxonomic scope" value="Eukaryota"/>
</dbReference>
<dbReference type="HOGENOM" id="CLU_022060_0_1_1"/>
<dbReference type="InParanoid" id="Q4QR99"/>
<dbReference type="OrthoDB" id="10249838at2759"/>
<dbReference type="PhylomeDB" id="Q4QR99"/>
<dbReference type="TreeFam" id="TF300732"/>
<dbReference type="PRO" id="PR:Q4QR99"/>
<dbReference type="Proteomes" id="UP000002494">
    <property type="component" value="Unplaced"/>
</dbReference>
<dbReference type="GO" id="GO:0005737">
    <property type="term" value="C:cytoplasm"/>
    <property type="evidence" value="ECO:0000266"/>
    <property type="project" value="RGD"/>
</dbReference>
<dbReference type="GO" id="GO:0032473">
    <property type="term" value="C:cytoplasmic side of mitochondrial outer membrane"/>
    <property type="evidence" value="ECO:0000266"/>
    <property type="project" value="RGD"/>
</dbReference>
<dbReference type="GO" id="GO:0005739">
    <property type="term" value="C:mitochondrion"/>
    <property type="evidence" value="ECO:0000266"/>
    <property type="project" value="RGD"/>
</dbReference>
<dbReference type="GO" id="GO:0005634">
    <property type="term" value="C:nucleus"/>
    <property type="evidence" value="ECO:0000266"/>
    <property type="project" value="RGD"/>
</dbReference>
<dbReference type="GO" id="GO:0032991">
    <property type="term" value="C:protein-containing complex"/>
    <property type="evidence" value="ECO:0000266"/>
    <property type="project" value="RGD"/>
</dbReference>
<dbReference type="GO" id="GO:1990234">
    <property type="term" value="C:transferase complex"/>
    <property type="evidence" value="ECO:0000266"/>
    <property type="project" value="RGD"/>
</dbReference>
<dbReference type="GO" id="GO:0120507">
    <property type="term" value="C:tRNA-guanine transglycosylase complex"/>
    <property type="evidence" value="ECO:0000266"/>
    <property type="project" value="RGD"/>
</dbReference>
<dbReference type="GO" id="GO:0046872">
    <property type="term" value="F:metal ion binding"/>
    <property type="evidence" value="ECO:0007669"/>
    <property type="project" value="UniProtKB-KW"/>
</dbReference>
<dbReference type="GO" id="GO:0046982">
    <property type="term" value="F:protein heterodimerization activity"/>
    <property type="evidence" value="ECO:0000250"/>
    <property type="project" value="UniProtKB"/>
</dbReference>
<dbReference type="GO" id="GO:0042803">
    <property type="term" value="F:protein homodimerization activity"/>
    <property type="evidence" value="ECO:0000250"/>
    <property type="project" value="UniProtKB"/>
</dbReference>
<dbReference type="GO" id="GO:0008479">
    <property type="term" value="F:tRNA-guanosine(34) queuine transglycosylase activity"/>
    <property type="evidence" value="ECO:0000250"/>
    <property type="project" value="UniProtKB"/>
</dbReference>
<dbReference type="GO" id="GO:0101030">
    <property type="term" value="P:tRNA-guanine transglycosylation"/>
    <property type="evidence" value="ECO:0000266"/>
    <property type="project" value="RGD"/>
</dbReference>
<dbReference type="FunFam" id="3.20.20.105:FF:000001">
    <property type="entry name" value="Queuine tRNA-ribosyltransferase"/>
    <property type="match status" value="1"/>
</dbReference>
<dbReference type="Gene3D" id="3.20.20.105">
    <property type="entry name" value="Queuine tRNA-ribosyltransferase-like"/>
    <property type="match status" value="1"/>
</dbReference>
<dbReference type="HAMAP" id="MF_00168">
    <property type="entry name" value="Q_tRNA_Tgt"/>
    <property type="match status" value="1"/>
</dbReference>
<dbReference type="InterPro" id="IPR004803">
    <property type="entry name" value="TGT"/>
</dbReference>
<dbReference type="InterPro" id="IPR036511">
    <property type="entry name" value="TGT-like_sf"/>
</dbReference>
<dbReference type="InterPro" id="IPR002616">
    <property type="entry name" value="tRNA_ribo_trans-like"/>
</dbReference>
<dbReference type="NCBIfam" id="TIGR00430">
    <property type="entry name" value="Q_tRNA_tgt"/>
    <property type="match status" value="1"/>
</dbReference>
<dbReference type="NCBIfam" id="TIGR00449">
    <property type="entry name" value="tgt_general"/>
    <property type="match status" value="1"/>
</dbReference>
<dbReference type="PANTHER" id="PTHR43530">
    <property type="entry name" value="QUEUINE TRNA-RIBOSYLTRANSFERASE CATALYTIC SUBUNIT 1"/>
    <property type="match status" value="1"/>
</dbReference>
<dbReference type="PANTHER" id="PTHR43530:SF1">
    <property type="entry name" value="QUEUINE TRNA-RIBOSYLTRANSFERASE CATALYTIC SUBUNIT 1"/>
    <property type="match status" value="1"/>
</dbReference>
<dbReference type="Pfam" id="PF01702">
    <property type="entry name" value="TGT"/>
    <property type="match status" value="1"/>
</dbReference>
<dbReference type="SUPFAM" id="SSF51713">
    <property type="entry name" value="tRNA-guanine transglycosylase"/>
    <property type="match status" value="1"/>
</dbReference>
<keyword id="KW-0007">Acetylation</keyword>
<keyword id="KW-0025">Alternative splicing</keyword>
<keyword id="KW-0963">Cytoplasm</keyword>
<keyword id="KW-0328">Glycosyltransferase</keyword>
<keyword id="KW-0472">Membrane</keyword>
<keyword id="KW-0479">Metal-binding</keyword>
<keyword id="KW-0496">Mitochondrion</keyword>
<keyword id="KW-1000">Mitochondrion outer membrane</keyword>
<keyword id="KW-0597">Phosphoprotein</keyword>
<keyword id="KW-1185">Reference proteome</keyword>
<keyword id="KW-0808">Transferase</keyword>
<keyword id="KW-0819">tRNA processing</keyword>
<keyword id="KW-0862">Zinc</keyword>
<accession>Q4QR99</accession>
<accession>Q9JMA0</accession>
<reference key="1">
    <citation type="submission" date="1999-11" db="EMBL/GenBank/DDBJ databases">
        <title>Rat tRNA-guanine transglycosylase (TGT).</title>
        <authorList>
            <person name="Hidaka T."/>
            <person name="Morishita T."/>
        </authorList>
    </citation>
    <scope>NUCLEOTIDE SEQUENCE [MRNA] (ISOFORM 2)</scope>
</reference>
<reference key="2">
    <citation type="journal article" date="2004" name="Genome Res.">
        <title>The status, quality, and expansion of the NIH full-length cDNA project: the Mammalian Gene Collection (MGC).</title>
        <authorList>
            <consortium name="The MGC Project Team"/>
        </authorList>
    </citation>
    <scope>NUCLEOTIDE SEQUENCE [LARGE SCALE MRNA] (ISOFORM 1)</scope>
    <source>
        <tissue>Thymus</tissue>
    </source>
</reference>
<reference key="3">
    <citation type="journal article" date="1980" name="Biochemistry">
        <title>Transfer ribonucleic acid guanine transglycosylase isolated from rat liver.</title>
        <authorList>
            <person name="Shindo-Okada N."/>
            <person name="Okada N."/>
            <person name="Ohgi T."/>
            <person name="Goto T."/>
            <person name="Nishimura S."/>
        </authorList>
    </citation>
    <scope>FUNCTION</scope>
    <scope>CATALYTIC ACTIVITY</scope>
    <scope>BIOPHYSICOCHEMICAL PROPERTIES</scope>
</reference>
<evidence type="ECO:0000250" key="1">
    <source>
        <dbReference type="UniProtKB" id="Q9BXR0"/>
    </source>
</evidence>
<evidence type="ECO:0000255" key="2">
    <source>
        <dbReference type="HAMAP-Rule" id="MF_03218"/>
    </source>
</evidence>
<evidence type="ECO:0000269" key="3">
    <source>
    </source>
</evidence>
<evidence type="ECO:0000303" key="4">
    <source ref="1"/>
</evidence>
<evidence type="ECO:0000305" key="5"/>
<feature type="initiator methionine" description="Removed" evidence="1">
    <location>
        <position position="1"/>
    </location>
</feature>
<feature type="chain" id="PRO_0000383946" description="Queuine tRNA-ribosyltransferase catalytic subunit 1">
    <location>
        <begin position="2"/>
        <end position="403"/>
    </location>
</feature>
<feature type="region of interest" description="RNA binding" evidence="2">
    <location>
        <begin position="260"/>
        <end position="266"/>
    </location>
</feature>
<feature type="region of interest" description="RNA binding; important for wobble base 34 recognition" evidence="2">
    <location>
        <begin position="284"/>
        <end position="288"/>
    </location>
</feature>
<feature type="active site" description="Proton acceptor" evidence="2">
    <location>
        <position position="105"/>
    </location>
</feature>
<feature type="active site" description="Nucleophile" evidence="2">
    <location>
        <position position="279"/>
    </location>
</feature>
<feature type="binding site" evidence="2">
    <location>
        <begin position="105"/>
        <end position="109"/>
    </location>
    <ligand>
        <name>queuine</name>
        <dbReference type="ChEBI" id="CHEBI:17433"/>
    </ligand>
</feature>
<feature type="binding site" evidence="2">
    <location>
        <position position="159"/>
    </location>
    <ligand>
        <name>queuine</name>
        <dbReference type="ChEBI" id="CHEBI:17433"/>
    </ligand>
</feature>
<feature type="binding site" evidence="2">
    <location>
        <position position="202"/>
    </location>
    <ligand>
        <name>queuine</name>
        <dbReference type="ChEBI" id="CHEBI:17433"/>
    </ligand>
</feature>
<feature type="binding site" evidence="2">
    <location>
        <position position="229"/>
    </location>
    <ligand>
        <name>queuine</name>
        <dbReference type="ChEBI" id="CHEBI:17433"/>
    </ligand>
</feature>
<feature type="binding site" evidence="2">
    <location>
        <position position="317"/>
    </location>
    <ligand>
        <name>Zn(2+)</name>
        <dbReference type="ChEBI" id="CHEBI:29105"/>
    </ligand>
</feature>
<feature type="binding site" evidence="2">
    <location>
        <position position="319"/>
    </location>
    <ligand>
        <name>Zn(2+)</name>
        <dbReference type="ChEBI" id="CHEBI:29105"/>
    </ligand>
</feature>
<feature type="binding site" evidence="2">
    <location>
        <position position="322"/>
    </location>
    <ligand>
        <name>Zn(2+)</name>
        <dbReference type="ChEBI" id="CHEBI:29105"/>
    </ligand>
</feature>
<feature type="binding site" evidence="2">
    <location>
        <position position="348"/>
    </location>
    <ligand>
        <name>Zn(2+)</name>
        <dbReference type="ChEBI" id="CHEBI:29105"/>
    </ligand>
</feature>
<feature type="modified residue" description="N-acetylalanine" evidence="1">
    <location>
        <position position="2"/>
    </location>
</feature>
<feature type="modified residue" description="Phosphoserine" evidence="1">
    <location>
        <position position="139"/>
    </location>
</feature>
<feature type="splice variant" id="VSP_038056" description="In isoform 2." evidence="4">
    <original>LQLLSAARSSILEQRFPDFVRNFMRTMYGDHSLCPAWAIEALASVGITLT</original>
    <variation>VTWMDMVWGREGLGSQGRVG</variation>
    <location>
        <begin position="354"/>
        <end position="403"/>
    </location>
</feature>